<reference key="1">
    <citation type="journal article" date="2006" name="Proc. Natl. Acad. Sci. U.S.A.">
        <title>Comparative genomics of the lactic acid bacteria.</title>
        <authorList>
            <person name="Makarova K.S."/>
            <person name="Slesarev A."/>
            <person name="Wolf Y.I."/>
            <person name="Sorokin A."/>
            <person name="Mirkin B."/>
            <person name="Koonin E.V."/>
            <person name="Pavlov A."/>
            <person name="Pavlova N."/>
            <person name="Karamychev V."/>
            <person name="Polouchine N."/>
            <person name="Shakhova V."/>
            <person name="Grigoriev I."/>
            <person name="Lou Y."/>
            <person name="Rohksar D."/>
            <person name="Lucas S."/>
            <person name="Huang K."/>
            <person name="Goodstein D.M."/>
            <person name="Hawkins T."/>
            <person name="Plengvidhya V."/>
            <person name="Welker D."/>
            <person name="Hughes J."/>
            <person name="Goh Y."/>
            <person name="Benson A."/>
            <person name="Baldwin K."/>
            <person name="Lee J.-H."/>
            <person name="Diaz-Muniz I."/>
            <person name="Dosti B."/>
            <person name="Smeianov V."/>
            <person name="Wechter W."/>
            <person name="Barabote R."/>
            <person name="Lorca G."/>
            <person name="Altermann E."/>
            <person name="Barrangou R."/>
            <person name="Ganesan B."/>
            <person name="Xie Y."/>
            <person name="Rawsthorne H."/>
            <person name="Tamir D."/>
            <person name="Parker C."/>
            <person name="Breidt F."/>
            <person name="Broadbent J.R."/>
            <person name="Hutkins R."/>
            <person name="O'Sullivan D."/>
            <person name="Steele J."/>
            <person name="Unlu G."/>
            <person name="Saier M.H. Jr."/>
            <person name="Klaenhammer T."/>
            <person name="Richardson P."/>
            <person name="Kozyavkin S."/>
            <person name="Weimer B.C."/>
            <person name="Mills D.A."/>
        </authorList>
    </citation>
    <scope>NUCLEOTIDE SEQUENCE [LARGE SCALE GENOMIC DNA]</scope>
    <source>
        <strain>ATCC 367 / BCRC 12310 / CIP 105137 / JCM 1170 / LMG 11437 / NCIMB 947 / NCTC 947</strain>
    </source>
</reference>
<keyword id="KW-1185">Reference proteome</keyword>
<keyword id="KW-0687">Ribonucleoprotein</keyword>
<keyword id="KW-0689">Ribosomal protein</keyword>
<keyword id="KW-0694">RNA-binding</keyword>
<keyword id="KW-0699">rRNA-binding</keyword>
<sequence>MAGQRRGGRRRRKVDFIAANHIEYIDYKDTDLLRRFISERGKILPRRVTGTSAKNQRKLTIAIKRSRIMGLMPFVSEE</sequence>
<protein>
    <recommendedName>
        <fullName evidence="1">Small ribosomal subunit protein bS18</fullName>
    </recommendedName>
    <alternativeName>
        <fullName evidence="2">30S ribosomal protein S18</fullName>
    </alternativeName>
</protein>
<dbReference type="EMBL" id="CP000416">
    <property type="protein sequence ID" value="ABJ63186.1"/>
    <property type="molecule type" value="Genomic_DNA"/>
</dbReference>
<dbReference type="RefSeq" id="WP_011666824.1">
    <property type="nucleotide sequence ID" value="NC_008497.1"/>
</dbReference>
<dbReference type="SMR" id="Q03UD6"/>
<dbReference type="STRING" id="387344.LVIS_0009"/>
<dbReference type="GeneID" id="97413516"/>
<dbReference type="KEGG" id="lbr:LVIS_0009"/>
<dbReference type="eggNOG" id="COG0238">
    <property type="taxonomic scope" value="Bacteria"/>
</dbReference>
<dbReference type="HOGENOM" id="CLU_148710_2_2_9"/>
<dbReference type="Proteomes" id="UP000001652">
    <property type="component" value="Chromosome"/>
</dbReference>
<dbReference type="GO" id="GO:0022627">
    <property type="term" value="C:cytosolic small ribosomal subunit"/>
    <property type="evidence" value="ECO:0007669"/>
    <property type="project" value="TreeGrafter"/>
</dbReference>
<dbReference type="GO" id="GO:0070181">
    <property type="term" value="F:small ribosomal subunit rRNA binding"/>
    <property type="evidence" value="ECO:0007669"/>
    <property type="project" value="TreeGrafter"/>
</dbReference>
<dbReference type="GO" id="GO:0003735">
    <property type="term" value="F:structural constituent of ribosome"/>
    <property type="evidence" value="ECO:0007669"/>
    <property type="project" value="InterPro"/>
</dbReference>
<dbReference type="GO" id="GO:0006412">
    <property type="term" value="P:translation"/>
    <property type="evidence" value="ECO:0007669"/>
    <property type="project" value="UniProtKB-UniRule"/>
</dbReference>
<dbReference type="FunFam" id="4.10.640.10:FF:000003">
    <property type="entry name" value="30S ribosomal protein S18"/>
    <property type="match status" value="1"/>
</dbReference>
<dbReference type="Gene3D" id="4.10.640.10">
    <property type="entry name" value="Ribosomal protein S18"/>
    <property type="match status" value="1"/>
</dbReference>
<dbReference type="HAMAP" id="MF_00270">
    <property type="entry name" value="Ribosomal_bS18"/>
    <property type="match status" value="1"/>
</dbReference>
<dbReference type="InterPro" id="IPR001648">
    <property type="entry name" value="Ribosomal_bS18"/>
</dbReference>
<dbReference type="InterPro" id="IPR018275">
    <property type="entry name" value="Ribosomal_bS18_CS"/>
</dbReference>
<dbReference type="InterPro" id="IPR036870">
    <property type="entry name" value="Ribosomal_bS18_sf"/>
</dbReference>
<dbReference type="NCBIfam" id="TIGR00165">
    <property type="entry name" value="S18"/>
    <property type="match status" value="1"/>
</dbReference>
<dbReference type="PANTHER" id="PTHR13479">
    <property type="entry name" value="30S RIBOSOMAL PROTEIN S18"/>
    <property type="match status" value="1"/>
</dbReference>
<dbReference type="PANTHER" id="PTHR13479:SF40">
    <property type="entry name" value="SMALL RIBOSOMAL SUBUNIT PROTEIN BS18M"/>
    <property type="match status" value="1"/>
</dbReference>
<dbReference type="Pfam" id="PF01084">
    <property type="entry name" value="Ribosomal_S18"/>
    <property type="match status" value="1"/>
</dbReference>
<dbReference type="PRINTS" id="PR00974">
    <property type="entry name" value="RIBOSOMALS18"/>
</dbReference>
<dbReference type="SUPFAM" id="SSF46911">
    <property type="entry name" value="Ribosomal protein S18"/>
    <property type="match status" value="1"/>
</dbReference>
<dbReference type="PROSITE" id="PS00057">
    <property type="entry name" value="RIBOSOMAL_S18"/>
    <property type="match status" value="1"/>
</dbReference>
<accession>Q03UD6</accession>
<feature type="chain" id="PRO_1000003514" description="Small ribosomal subunit protein bS18">
    <location>
        <begin position="1"/>
        <end position="78"/>
    </location>
</feature>
<name>RS18_LEVBA</name>
<gene>
    <name evidence="1" type="primary">rpsR</name>
    <name type="ordered locus">LVIS_0009</name>
</gene>
<comment type="function">
    <text evidence="1">Binds as a heterodimer with protein bS6 to the central domain of the 16S rRNA, where it helps stabilize the platform of the 30S subunit.</text>
</comment>
<comment type="subunit">
    <text evidence="1">Part of the 30S ribosomal subunit. Forms a tight heterodimer with protein bS6.</text>
</comment>
<comment type="similarity">
    <text evidence="1">Belongs to the bacterial ribosomal protein bS18 family.</text>
</comment>
<evidence type="ECO:0000255" key="1">
    <source>
        <dbReference type="HAMAP-Rule" id="MF_00270"/>
    </source>
</evidence>
<evidence type="ECO:0000305" key="2"/>
<organism>
    <name type="scientific">Levilactobacillus brevis (strain ATCC 367 / BCRC 12310 / CIP 105137 / JCM 1170 / LMG 11437 / NCIMB 947 / NCTC 947)</name>
    <name type="common">Lactobacillus brevis</name>
    <dbReference type="NCBI Taxonomy" id="387344"/>
    <lineage>
        <taxon>Bacteria</taxon>
        <taxon>Bacillati</taxon>
        <taxon>Bacillota</taxon>
        <taxon>Bacilli</taxon>
        <taxon>Lactobacillales</taxon>
        <taxon>Lactobacillaceae</taxon>
        <taxon>Levilactobacillus</taxon>
    </lineage>
</organism>
<proteinExistence type="inferred from homology"/>